<evidence type="ECO:0000250" key="1"/>
<evidence type="ECO:0000250" key="2">
    <source>
        <dbReference type="UniProtKB" id="P06710"/>
    </source>
</evidence>
<evidence type="ECO:0000255" key="3"/>
<evidence type="ECO:0000256" key="4">
    <source>
        <dbReference type="SAM" id="MobiDB-lite"/>
    </source>
</evidence>
<evidence type="ECO:0000305" key="5"/>
<keyword id="KW-0067">ATP-binding</keyword>
<keyword id="KW-0235">DNA replication</keyword>
<keyword id="KW-0239">DNA-directed DNA polymerase</keyword>
<keyword id="KW-0479">Metal-binding</keyword>
<keyword id="KW-0547">Nucleotide-binding</keyword>
<keyword id="KW-0548">Nucleotidyltransferase</keyword>
<keyword id="KW-1185">Reference proteome</keyword>
<keyword id="KW-0808">Transferase</keyword>
<keyword id="KW-0862">Zinc</keyword>
<organism>
    <name type="scientific">Haemophilus influenzae (strain ATCC 51907 / DSM 11121 / KW20 / Rd)</name>
    <dbReference type="NCBI Taxonomy" id="71421"/>
    <lineage>
        <taxon>Bacteria</taxon>
        <taxon>Pseudomonadati</taxon>
        <taxon>Pseudomonadota</taxon>
        <taxon>Gammaproteobacteria</taxon>
        <taxon>Pasteurellales</taxon>
        <taxon>Pasteurellaceae</taxon>
        <taxon>Haemophilus</taxon>
    </lineage>
</organism>
<proteinExistence type="inferred from homology"/>
<dbReference type="EC" id="2.7.7.7"/>
<dbReference type="EMBL" id="L42023">
    <property type="protein sequence ID" value="AAC22882.1"/>
    <property type="molecule type" value="Genomic_DNA"/>
</dbReference>
<dbReference type="PIR" id="F64111">
    <property type="entry name" value="F64111"/>
</dbReference>
<dbReference type="RefSeq" id="NP_439385.1">
    <property type="nucleotide sequence ID" value="NC_000907.1"/>
</dbReference>
<dbReference type="SMR" id="P43746"/>
<dbReference type="STRING" id="71421.HI_1229"/>
<dbReference type="EnsemblBacteria" id="AAC22882">
    <property type="protein sequence ID" value="AAC22882"/>
    <property type="gene ID" value="HI_1229"/>
</dbReference>
<dbReference type="KEGG" id="hin:HI_1229"/>
<dbReference type="PATRIC" id="fig|71421.8.peg.1281"/>
<dbReference type="eggNOG" id="COG2812">
    <property type="taxonomic scope" value="Bacteria"/>
</dbReference>
<dbReference type="HOGENOM" id="CLU_006229_6_0_6"/>
<dbReference type="OrthoDB" id="9810148at2"/>
<dbReference type="PhylomeDB" id="P43746"/>
<dbReference type="BioCyc" id="HINF71421:G1GJ1-1260-MONOMER"/>
<dbReference type="Proteomes" id="UP000000579">
    <property type="component" value="Chromosome"/>
</dbReference>
<dbReference type="GO" id="GO:0009360">
    <property type="term" value="C:DNA polymerase III complex"/>
    <property type="evidence" value="ECO:0007669"/>
    <property type="project" value="InterPro"/>
</dbReference>
<dbReference type="GO" id="GO:0005524">
    <property type="term" value="F:ATP binding"/>
    <property type="evidence" value="ECO:0007669"/>
    <property type="project" value="UniProtKB-KW"/>
</dbReference>
<dbReference type="GO" id="GO:0016887">
    <property type="term" value="F:ATP hydrolysis activity"/>
    <property type="evidence" value="ECO:0007669"/>
    <property type="project" value="InterPro"/>
</dbReference>
<dbReference type="GO" id="GO:0003677">
    <property type="term" value="F:DNA binding"/>
    <property type="evidence" value="ECO:0007669"/>
    <property type="project" value="InterPro"/>
</dbReference>
<dbReference type="GO" id="GO:0003887">
    <property type="term" value="F:DNA-directed DNA polymerase activity"/>
    <property type="evidence" value="ECO:0007669"/>
    <property type="project" value="UniProtKB-KW"/>
</dbReference>
<dbReference type="GO" id="GO:0046872">
    <property type="term" value="F:metal ion binding"/>
    <property type="evidence" value="ECO:0007669"/>
    <property type="project" value="UniProtKB-KW"/>
</dbReference>
<dbReference type="GO" id="GO:0006261">
    <property type="term" value="P:DNA-templated DNA replication"/>
    <property type="evidence" value="ECO:0000318"/>
    <property type="project" value="GO_Central"/>
</dbReference>
<dbReference type="CDD" id="cd00009">
    <property type="entry name" value="AAA"/>
    <property type="match status" value="1"/>
</dbReference>
<dbReference type="CDD" id="cd18137">
    <property type="entry name" value="HLD_clamp_pol_III_gamma_tau"/>
    <property type="match status" value="1"/>
</dbReference>
<dbReference type="FunFam" id="1.10.8.60:FF:000013">
    <property type="entry name" value="DNA polymerase III subunit gamma/tau"/>
    <property type="match status" value="1"/>
</dbReference>
<dbReference type="FunFam" id="1.20.272.10:FF:000003">
    <property type="entry name" value="DNA polymerase III subunit gamma/tau"/>
    <property type="match status" value="1"/>
</dbReference>
<dbReference type="FunFam" id="3.40.50.300:FF:000014">
    <property type="entry name" value="DNA polymerase III subunit gamma/tau"/>
    <property type="match status" value="1"/>
</dbReference>
<dbReference type="Gene3D" id="1.10.8.60">
    <property type="match status" value="1"/>
</dbReference>
<dbReference type="Gene3D" id="1.20.272.10">
    <property type="match status" value="1"/>
</dbReference>
<dbReference type="Gene3D" id="3.30.300.150">
    <property type="entry name" value="DNA polymerase III, tau subunit, domain V"/>
    <property type="match status" value="1"/>
</dbReference>
<dbReference type="Gene3D" id="3.40.50.300">
    <property type="entry name" value="P-loop containing nucleotide triphosphate hydrolases"/>
    <property type="match status" value="1"/>
</dbReference>
<dbReference type="InterPro" id="IPR003593">
    <property type="entry name" value="AAA+_ATPase"/>
</dbReference>
<dbReference type="InterPro" id="IPR008921">
    <property type="entry name" value="DNA_pol3_clamp-load_cplx_C"/>
</dbReference>
<dbReference type="InterPro" id="IPR022754">
    <property type="entry name" value="DNA_pol_III_gamma-3"/>
</dbReference>
<dbReference type="InterPro" id="IPR012763">
    <property type="entry name" value="DNA_pol_III_sug/sutau_N"/>
</dbReference>
<dbReference type="InterPro" id="IPR021029">
    <property type="entry name" value="DNA_pol_III_tau_dom-5"/>
</dbReference>
<dbReference type="InterPro" id="IPR050238">
    <property type="entry name" value="DNA_Rep/Repair_Clamp_Loader"/>
</dbReference>
<dbReference type="InterPro" id="IPR045085">
    <property type="entry name" value="HLD_clamp_pol_III_gamma_tau"/>
</dbReference>
<dbReference type="InterPro" id="IPR027417">
    <property type="entry name" value="P-loop_NTPase"/>
</dbReference>
<dbReference type="InterPro" id="IPR038249">
    <property type="entry name" value="PolIII_tau_V_sf"/>
</dbReference>
<dbReference type="NCBIfam" id="TIGR02397">
    <property type="entry name" value="dnaX_nterm"/>
    <property type="match status" value="1"/>
</dbReference>
<dbReference type="NCBIfam" id="NF004046">
    <property type="entry name" value="PRK05563.1"/>
    <property type="match status" value="1"/>
</dbReference>
<dbReference type="NCBIfam" id="NF005942">
    <property type="entry name" value="PRK07994.1"/>
    <property type="match status" value="1"/>
</dbReference>
<dbReference type="PANTHER" id="PTHR11669:SF0">
    <property type="entry name" value="PROTEIN STICHEL-LIKE 2"/>
    <property type="match status" value="1"/>
</dbReference>
<dbReference type="PANTHER" id="PTHR11669">
    <property type="entry name" value="REPLICATION FACTOR C / DNA POLYMERASE III GAMMA-TAU SUBUNIT"/>
    <property type="match status" value="1"/>
</dbReference>
<dbReference type="Pfam" id="PF13177">
    <property type="entry name" value="DNA_pol3_delta2"/>
    <property type="match status" value="1"/>
</dbReference>
<dbReference type="Pfam" id="PF12169">
    <property type="entry name" value="DNA_pol3_gamma3"/>
    <property type="match status" value="1"/>
</dbReference>
<dbReference type="Pfam" id="PF12170">
    <property type="entry name" value="DNA_pol3_tau_5"/>
    <property type="match status" value="1"/>
</dbReference>
<dbReference type="Pfam" id="PF22608">
    <property type="entry name" value="DNAX_ATPase_lid"/>
    <property type="match status" value="1"/>
</dbReference>
<dbReference type="SMART" id="SM00382">
    <property type="entry name" value="AAA"/>
    <property type="match status" value="1"/>
</dbReference>
<dbReference type="SUPFAM" id="SSF52540">
    <property type="entry name" value="P-loop containing nucleoside triphosphate hydrolases"/>
    <property type="match status" value="1"/>
</dbReference>
<dbReference type="SUPFAM" id="SSF48019">
    <property type="entry name" value="post-AAA+ oligomerization domain-like"/>
    <property type="match status" value="1"/>
</dbReference>
<sequence>MSYQVLARKWRPKTFADVVGQEHIITALANGLKDNRLHHAYLFSGTRGVGKTSIARLFAKGLNCVHGVTATPCGECENCKAIEQGNFIDLIEIDAASRTKVEDTRELLDNVQYKPVVGRFKVYLIDEVHMLSRHSFNALLKTLEEPPEYVKFLLATTDPQKLPVTILSRCLQFHLKALDETQISQHLAHILTQENIPFEDPALVKLAKAAQGSIRDSLSLTDQAIAMGDRQVTNNVVSNMLGLLDDNYSVDILYALHQGNGELLMRTLQRVADAAGDWDKLLGECAEKLHQIALMQLLPQKSSDNNEHFSFLAKHISPENVQFFYQVIVSGRKDLSNAPNRRIGAEMTLLRALAFHPKFLTAVPKANTTITPPPSTPSAVENTGNYVDVPVLSQSIKSAYSQAKPNKTSIPNLASLSALDALEHLTQLENQERQEHKAESLAVVSETLHHIQELDEEKSHKKMTALPVREMTEPKPKHIEKPTLPSNAAQAPQKNSTEENSSDDNVEIAQDEQEILSADTYRWEWSNPELAKADTGVCPSDIKQAILKDITPELRLKIITQTQQQDQWADIVERSGLTGFSKELALNCFLQSKTDDEINLGLHSEKSHLRQDRSIKNLAEALSKLQGKDIRLTINLDDSNVTTPIEYRRNIYQALREKAQNELQKDSKLQILLNEFDAKLDVESIRPV</sequence>
<protein>
    <recommendedName>
        <fullName>DNA polymerase III subunit tau/gamma</fullName>
        <ecNumber>2.7.7.7</ecNumber>
    </recommendedName>
</protein>
<feature type="chain" id="PRO_0000105493" description="DNA polymerase III subunit tau/gamma">
    <location>
        <begin position="1"/>
        <end position="688"/>
    </location>
</feature>
<feature type="region of interest" description="Disordered" evidence="4">
    <location>
        <begin position="452"/>
        <end position="506"/>
    </location>
</feature>
<feature type="compositionally biased region" description="Basic and acidic residues" evidence="4">
    <location>
        <begin position="470"/>
        <end position="481"/>
    </location>
</feature>
<feature type="compositionally biased region" description="Polar residues" evidence="4">
    <location>
        <begin position="484"/>
        <end position="499"/>
    </location>
</feature>
<feature type="binding site" evidence="3">
    <location>
        <begin position="45"/>
        <end position="52"/>
    </location>
    <ligand>
        <name>ATP</name>
        <dbReference type="ChEBI" id="CHEBI:30616"/>
    </ligand>
</feature>
<feature type="binding site" evidence="2">
    <location>
        <position position="64"/>
    </location>
    <ligand>
        <name>Zn(2+)</name>
        <dbReference type="ChEBI" id="CHEBI:29105"/>
    </ligand>
</feature>
<feature type="binding site" evidence="2">
    <location>
        <position position="73"/>
    </location>
    <ligand>
        <name>Zn(2+)</name>
        <dbReference type="ChEBI" id="CHEBI:29105"/>
    </ligand>
</feature>
<feature type="binding site" evidence="2">
    <location>
        <position position="76"/>
    </location>
    <ligand>
        <name>Zn(2+)</name>
        <dbReference type="ChEBI" id="CHEBI:29105"/>
    </ligand>
</feature>
<feature type="binding site" evidence="2">
    <location>
        <position position="79"/>
    </location>
    <ligand>
        <name>Zn(2+)</name>
        <dbReference type="ChEBI" id="CHEBI:29105"/>
    </ligand>
</feature>
<accession>P43746</accession>
<gene>
    <name type="primary">dnaX</name>
    <name type="ordered locus">HI_1229</name>
</gene>
<reference key="1">
    <citation type="journal article" date="1995" name="Science">
        <title>Whole-genome random sequencing and assembly of Haemophilus influenzae Rd.</title>
        <authorList>
            <person name="Fleischmann R.D."/>
            <person name="Adams M.D."/>
            <person name="White O."/>
            <person name="Clayton R.A."/>
            <person name="Kirkness E.F."/>
            <person name="Kerlavage A.R."/>
            <person name="Bult C.J."/>
            <person name="Tomb J.-F."/>
            <person name="Dougherty B.A."/>
            <person name="Merrick J.M."/>
            <person name="McKenney K."/>
            <person name="Sutton G.G."/>
            <person name="FitzHugh W."/>
            <person name="Fields C.A."/>
            <person name="Gocayne J.D."/>
            <person name="Scott J.D."/>
            <person name="Shirley R."/>
            <person name="Liu L.-I."/>
            <person name="Glodek A."/>
            <person name="Kelley J.M."/>
            <person name="Weidman J.F."/>
            <person name="Phillips C.A."/>
            <person name="Spriggs T."/>
            <person name="Hedblom E."/>
            <person name="Cotton M.D."/>
            <person name="Utterback T.R."/>
            <person name="Hanna M.C."/>
            <person name="Nguyen D.T."/>
            <person name="Saudek D.M."/>
            <person name="Brandon R.C."/>
            <person name="Fine L.D."/>
            <person name="Fritchman J.L."/>
            <person name="Fuhrmann J.L."/>
            <person name="Geoghagen N.S.M."/>
            <person name="Gnehm C.L."/>
            <person name="McDonald L.A."/>
            <person name="Small K.V."/>
            <person name="Fraser C.M."/>
            <person name="Smith H.O."/>
            <person name="Venter J.C."/>
        </authorList>
    </citation>
    <scope>NUCLEOTIDE SEQUENCE [LARGE SCALE GENOMIC DNA]</scope>
    <source>
        <strain>ATCC 51907 / DSM 11121 / KW20 / Rd</strain>
    </source>
</reference>
<name>DPO3X_HAEIN</name>
<comment type="function">
    <text>DNA polymerase III is a complex, multichain enzyme responsible for most of the replicative synthesis in bacteria. This DNA polymerase also exhibits 3' to 5' exonuclease activity.</text>
</comment>
<comment type="catalytic activity">
    <reaction>
        <text>DNA(n) + a 2'-deoxyribonucleoside 5'-triphosphate = DNA(n+1) + diphosphate</text>
        <dbReference type="Rhea" id="RHEA:22508"/>
        <dbReference type="Rhea" id="RHEA-COMP:17339"/>
        <dbReference type="Rhea" id="RHEA-COMP:17340"/>
        <dbReference type="ChEBI" id="CHEBI:33019"/>
        <dbReference type="ChEBI" id="CHEBI:61560"/>
        <dbReference type="ChEBI" id="CHEBI:173112"/>
        <dbReference type="EC" id="2.7.7.7"/>
    </reaction>
</comment>
<comment type="subunit">
    <text evidence="1">DNA polymerase III contains a core (composed of alpha, epsilon and theta chains) that associates with a tau subunit. This core dimerizes to form the POLIII' complex. PolIII' associates with the gamma complex (composed of gamma, delta, delta', psi and chi chains) and with the beta chain to form the complete DNA polymerase III complex (By similarity).</text>
</comment>
<comment type="miscellaneous">
    <text>As has been shown for E.coli (strain K12) and suggested for Salmonella typhimurium, the gamma subunit (approximately resides 1-430) might be generated by ribosomal frameshifting, leading to 2 protein products from 1 gene.</text>
</comment>
<comment type="similarity">
    <text evidence="5">Belongs to the DnaX/STICHEL family.</text>
</comment>